<protein>
    <recommendedName>
        <fullName evidence="1">Mitochondrial distribution and morphology protein 10</fullName>
    </recommendedName>
    <alternativeName>
        <fullName evidence="1">Mitochondrial inheritance component MDM10</fullName>
    </alternativeName>
</protein>
<proteinExistence type="inferred from homology"/>
<comment type="function">
    <text evidence="1">Component of the ERMES/MDM complex, which serves as a molecular tether to connect the endoplasmic reticulum and mitochondria. Components of this complex are involved in the control of mitochondrial shape and protein biogenesis and may function in phospholipid exchange. MDM10 is involved in the late assembly steps of the general translocase of the mitochondrial outer membrane (TOM complex). Functions in the TOM40-specific route of the assembly of outer membrane beta-barrel proteins, including the association of TOM40 with the receptor TOM22 and small TOM proteins. Can associate with the SAM(core) complex as well as the MDM12-MMM1 complex, both involved in late steps of the major beta-barrel assembly pathway, that is responsible for biogenesis of all outer membrane beta-barrel proteins. May act as a switch that shuttles between both complexes and channels precursor proteins into the TOM40-specific pathway. Plays a role in mitochondrial morphology and in the inheritance of mitochondria.</text>
</comment>
<comment type="subunit">
    <text evidence="1">Component of the ER-mitochondria encounter structure (ERMES) or MDM complex, composed of MMM1, MDM10, MDM12 and MDM34. Associates with the mitochondrial outer membrane sorting assembly machinery SAM(core) complex.</text>
</comment>
<comment type="subcellular location">
    <subcellularLocation>
        <location evidence="1">Mitochondrion outer membrane</location>
        <topology evidence="1">Multi-pass membrane protein</topology>
    </subcellularLocation>
    <text evidence="1">The ERMES/MDM complex localizes to a few discrete foci (around 10 per single cell), that represent mitochondria-endoplasmic reticulum junctions. These foci are often found next to mtDNA nucleoids.</text>
</comment>
<comment type="domain">
    <text>Lacks alpha-helical transmembrane segments, suggesting that it resides in the membrane via beta-sheet conformations similar to those predicted for other outer membrane proteins and porin.</text>
</comment>
<comment type="similarity">
    <text evidence="1">Belongs to the MDM10 family.</text>
</comment>
<accession>Q0TWV0</accession>
<dbReference type="EMBL" id="CH445366">
    <property type="protein sequence ID" value="EAT76603.1"/>
    <property type="molecule type" value="Genomic_DNA"/>
</dbReference>
<dbReference type="RefSeq" id="XP_001806154.1">
    <property type="nucleotide sequence ID" value="XM_001806102.1"/>
</dbReference>
<dbReference type="SMR" id="Q0TWV0"/>
<dbReference type="FunCoup" id="Q0TWV0">
    <property type="interactions" value="45"/>
</dbReference>
<dbReference type="STRING" id="321614.Q0TWV0"/>
<dbReference type="EnsemblFungi" id="SNOT_16024">
    <property type="protein sequence ID" value="SNOT_16024"/>
    <property type="gene ID" value="SNOG_16024"/>
</dbReference>
<dbReference type="GeneID" id="5983084"/>
<dbReference type="KEGG" id="pno:SNOG_16024"/>
<dbReference type="VEuPathDB" id="FungiDB:JI435_160240"/>
<dbReference type="eggNOG" id="ENOG502QUN5">
    <property type="taxonomic scope" value="Eukaryota"/>
</dbReference>
<dbReference type="HOGENOM" id="CLU_026505_1_0_1"/>
<dbReference type="InParanoid" id="Q0TWV0"/>
<dbReference type="OMA" id="VPGYRQI"/>
<dbReference type="OrthoDB" id="2103793at2759"/>
<dbReference type="Proteomes" id="UP000001055">
    <property type="component" value="Unassembled WGS sequence"/>
</dbReference>
<dbReference type="GO" id="GO:0032865">
    <property type="term" value="C:ERMES complex"/>
    <property type="evidence" value="ECO:0000318"/>
    <property type="project" value="GO_Central"/>
</dbReference>
<dbReference type="GO" id="GO:0001401">
    <property type="term" value="C:SAM complex"/>
    <property type="evidence" value="ECO:0000318"/>
    <property type="project" value="GO_Central"/>
</dbReference>
<dbReference type="GO" id="GO:0051654">
    <property type="term" value="P:establishment of mitochondrion localization"/>
    <property type="evidence" value="ECO:0000318"/>
    <property type="project" value="GO_Central"/>
</dbReference>
<dbReference type="GO" id="GO:0000002">
    <property type="term" value="P:mitochondrial genome maintenance"/>
    <property type="evidence" value="ECO:0007669"/>
    <property type="project" value="UniProtKB-UniRule"/>
</dbReference>
<dbReference type="GO" id="GO:0070096">
    <property type="term" value="P:mitochondrial outer membrane translocase complex assembly"/>
    <property type="evidence" value="ECO:0000318"/>
    <property type="project" value="GO_Central"/>
</dbReference>
<dbReference type="GO" id="GO:1990456">
    <property type="term" value="P:mitochondrion-endoplasmic reticulum membrane tethering"/>
    <property type="evidence" value="ECO:0000318"/>
    <property type="project" value="GO_Central"/>
</dbReference>
<dbReference type="GO" id="GO:0015914">
    <property type="term" value="P:phospholipid transport"/>
    <property type="evidence" value="ECO:0000318"/>
    <property type="project" value="GO_Central"/>
</dbReference>
<dbReference type="GO" id="GO:0045040">
    <property type="term" value="P:protein insertion into mitochondrial outer membrane"/>
    <property type="evidence" value="ECO:0000318"/>
    <property type="project" value="GO_Central"/>
</dbReference>
<dbReference type="Gene3D" id="2.40.160.10">
    <property type="entry name" value="Porin"/>
    <property type="match status" value="1"/>
</dbReference>
<dbReference type="HAMAP" id="MF_03102">
    <property type="entry name" value="Mdm10"/>
    <property type="match status" value="1"/>
</dbReference>
<dbReference type="InterPro" id="IPR027539">
    <property type="entry name" value="Mdm10"/>
</dbReference>
<dbReference type="InterPro" id="IPR023614">
    <property type="entry name" value="Porin_dom_sf"/>
</dbReference>
<dbReference type="PANTHER" id="PTHR28035">
    <property type="entry name" value="MITOCHONDRIAL DISTRIBUTION AND MORPHOLOGY PROTEIN 10"/>
    <property type="match status" value="1"/>
</dbReference>
<dbReference type="PANTHER" id="PTHR28035:SF1">
    <property type="entry name" value="MITOCHONDRIAL DISTRIBUTION AND MORPHOLOGY PROTEIN 10"/>
    <property type="match status" value="1"/>
</dbReference>
<dbReference type="Pfam" id="PF12519">
    <property type="entry name" value="MDM10"/>
    <property type="match status" value="2"/>
</dbReference>
<evidence type="ECO:0000255" key="1">
    <source>
        <dbReference type="HAMAP-Rule" id="MF_03102"/>
    </source>
</evidence>
<feature type="chain" id="PRO_0000384191" description="Mitochondrial distribution and morphology protein 10">
    <location>
        <begin position="1"/>
        <end position="392"/>
    </location>
</feature>
<name>MDM10_PHANO</name>
<keyword id="KW-0472">Membrane</keyword>
<keyword id="KW-0496">Mitochondrion</keyword>
<keyword id="KW-1000">Mitochondrion outer membrane</keyword>
<keyword id="KW-0812">Transmembrane</keyword>
<keyword id="KW-1134">Transmembrane beta strand</keyword>
<sequence length="392" mass="44179">MLDFMDNVQHAFYEASHWNVDNSYGALNATARALLDFDSPRGLRLQISSLAAPNFATSYTLGSVGVVDGSVSYLYSSLPLRKDFKSSRIDLHHVIRGFKHLQELRKPDEKWSWEQWHAGRRVDRKDTLLYGRIFLPQSRLEALYLRRLAPTRQLRIAAVSDSNLNNGGTILTLLQTDSGKYSTEYMYSTDSALMGLRGLYNFGPDPRVAPTEPTRPEQVEPVHGRFSAGAELYYGILNKSGGMSTGLRFTTLPNHPGFPYTMTLTLNPLMGNLSSTYAVKAGPSLALCSRFDFNFYSYESELQLGCELWRRRGNTDTEWAVKKLRPDWKRPAASPDDDVAGVLKAKVDQDGRVGLLWEGRIKELLFTLGASLDLKKREQIFRSVGIELQYSS</sequence>
<organism>
    <name type="scientific">Phaeosphaeria nodorum (strain SN15 / ATCC MYA-4574 / FGSC 10173)</name>
    <name type="common">Glume blotch fungus</name>
    <name type="synonym">Parastagonospora nodorum</name>
    <dbReference type="NCBI Taxonomy" id="321614"/>
    <lineage>
        <taxon>Eukaryota</taxon>
        <taxon>Fungi</taxon>
        <taxon>Dikarya</taxon>
        <taxon>Ascomycota</taxon>
        <taxon>Pezizomycotina</taxon>
        <taxon>Dothideomycetes</taxon>
        <taxon>Pleosporomycetidae</taxon>
        <taxon>Pleosporales</taxon>
        <taxon>Pleosporineae</taxon>
        <taxon>Phaeosphaeriaceae</taxon>
        <taxon>Parastagonospora</taxon>
    </lineage>
</organism>
<gene>
    <name evidence="1" type="primary">MDM10</name>
    <name type="ORF">SNOG_16024</name>
</gene>
<reference key="1">
    <citation type="journal article" date="2007" name="Plant Cell">
        <title>Dothideomycete-plant interactions illuminated by genome sequencing and EST analysis of the wheat pathogen Stagonospora nodorum.</title>
        <authorList>
            <person name="Hane J.K."/>
            <person name="Lowe R.G.T."/>
            <person name="Solomon P.S."/>
            <person name="Tan K.-C."/>
            <person name="Schoch C.L."/>
            <person name="Spatafora J.W."/>
            <person name="Crous P.W."/>
            <person name="Kodira C.D."/>
            <person name="Birren B.W."/>
            <person name="Galagan J.E."/>
            <person name="Torriani S.F.F."/>
            <person name="McDonald B.A."/>
            <person name="Oliver R.P."/>
        </authorList>
    </citation>
    <scope>NUCLEOTIDE SEQUENCE [LARGE SCALE GENOMIC DNA]</scope>
    <source>
        <strain>SN15 / ATCC MYA-4574 / FGSC 10173</strain>
    </source>
</reference>